<evidence type="ECO:0000255" key="1">
    <source>
        <dbReference type="HAMAP-Rule" id="MF_01185"/>
    </source>
</evidence>
<gene>
    <name evidence="1" type="primary">fliW</name>
    <name type="ordered locus">CLM_3104</name>
</gene>
<protein>
    <recommendedName>
        <fullName evidence="1">Flagellar assembly factor FliW</fullName>
    </recommendedName>
</protein>
<keyword id="KW-1005">Bacterial flagellum biogenesis</keyword>
<keyword id="KW-0143">Chaperone</keyword>
<keyword id="KW-0963">Cytoplasm</keyword>
<keyword id="KW-0810">Translation regulation</keyword>
<proteinExistence type="inferred from homology"/>
<dbReference type="EMBL" id="CP001581">
    <property type="protein sequence ID" value="ACO84365.1"/>
    <property type="molecule type" value="Genomic_DNA"/>
</dbReference>
<dbReference type="RefSeq" id="WP_011987029.1">
    <property type="nucleotide sequence ID" value="NC_012563.1"/>
</dbReference>
<dbReference type="SMR" id="C1FUD6"/>
<dbReference type="GeneID" id="5186937"/>
<dbReference type="KEGG" id="cby:CLM_3104"/>
<dbReference type="eggNOG" id="COG1699">
    <property type="taxonomic scope" value="Bacteria"/>
</dbReference>
<dbReference type="HOGENOM" id="CLU_112356_0_2_9"/>
<dbReference type="Proteomes" id="UP000001374">
    <property type="component" value="Chromosome"/>
</dbReference>
<dbReference type="GO" id="GO:0005737">
    <property type="term" value="C:cytoplasm"/>
    <property type="evidence" value="ECO:0007669"/>
    <property type="project" value="UniProtKB-SubCell"/>
</dbReference>
<dbReference type="GO" id="GO:0044780">
    <property type="term" value="P:bacterial-type flagellum assembly"/>
    <property type="evidence" value="ECO:0007669"/>
    <property type="project" value="UniProtKB-UniRule"/>
</dbReference>
<dbReference type="GO" id="GO:0006417">
    <property type="term" value="P:regulation of translation"/>
    <property type="evidence" value="ECO:0007669"/>
    <property type="project" value="UniProtKB-KW"/>
</dbReference>
<dbReference type="Gene3D" id="2.30.290.10">
    <property type="entry name" value="BH3618-like"/>
    <property type="match status" value="1"/>
</dbReference>
<dbReference type="HAMAP" id="MF_01185">
    <property type="entry name" value="FliW"/>
    <property type="match status" value="1"/>
</dbReference>
<dbReference type="InterPro" id="IPR003775">
    <property type="entry name" value="Flagellar_assembly_factor_FliW"/>
</dbReference>
<dbReference type="InterPro" id="IPR024046">
    <property type="entry name" value="Flagellar_assmbl_FliW_dom_sf"/>
</dbReference>
<dbReference type="NCBIfam" id="NF009793">
    <property type="entry name" value="PRK13285.1-1"/>
    <property type="match status" value="1"/>
</dbReference>
<dbReference type="PANTHER" id="PTHR39190">
    <property type="entry name" value="FLAGELLAR ASSEMBLY FACTOR FLIW"/>
    <property type="match status" value="1"/>
</dbReference>
<dbReference type="PANTHER" id="PTHR39190:SF1">
    <property type="entry name" value="FLAGELLAR ASSEMBLY FACTOR FLIW"/>
    <property type="match status" value="1"/>
</dbReference>
<dbReference type="Pfam" id="PF02623">
    <property type="entry name" value="FliW"/>
    <property type="match status" value="1"/>
</dbReference>
<dbReference type="SUPFAM" id="SSF141457">
    <property type="entry name" value="BH3618-like"/>
    <property type="match status" value="1"/>
</dbReference>
<organism>
    <name type="scientific">Clostridium botulinum (strain Kyoto / Type A2)</name>
    <dbReference type="NCBI Taxonomy" id="536232"/>
    <lineage>
        <taxon>Bacteria</taxon>
        <taxon>Bacillati</taxon>
        <taxon>Bacillota</taxon>
        <taxon>Clostridia</taxon>
        <taxon>Eubacteriales</taxon>
        <taxon>Clostridiaceae</taxon>
        <taxon>Clostridium</taxon>
    </lineage>
</organism>
<sequence>MKLNTKYHGCIEYEEKDVIYFQKGIPGFEELNKFIIFPVEDNEVFLVFHSIENEDIGIIVTSPFNIENNYEIQLEEEQITNLKLQDEKDALVLNTVTLDSDIDKITVNLRAPIIINIKEKIGEQIIINSDKYKVKHSLFKEEA</sequence>
<accession>C1FUD6</accession>
<reference key="1">
    <citation type="submission" date="2008-10" db="EMBL/GenBank/DDBJ databases">
        <title>Genome sequence of Clostridium botulinum A2 Kyoto.</title>
        <authorList>
            <person name="Shrivastava S."/>
            <person name="Brinkac L.M."/>
            <person name="Brown J.L."/>
            <person name="Bruce D."/>
            <person name="Detter C.C."/>
            <person name="Johnson E.A."/>
            <person name="Munk C.A."/>
            <person name="Smith L.A."/>
            <person name="Smith T.J."/>
            <person name="Sutton G."/>
            <person name="Brettin T.S."/>
        </authorList>
    </citation>
    <scope>NUCLEOTIDE SEQUENCE [LARGE SCALE GENOMIC DNA]</scope>
    <source>
        <strain>Kyoto / Type A2</strain>
    </source>
</reference>
<name>FLIW_CLOBJ</name>
<feature type="chain" id="PRO_1000164464" description="Flagellar assembly factor FliW">
    <location>
        <begin position="1"/>
        <end position="143"/>
    </location>
</feature>
<comment type="function">
    <text evidence="1">Acts as an anti-CsrA protein, binds CsrA and prevents it from repressing translation of its target genes, one of which is flagellin. Binds to flagellin and participates in the assembly of the flagellum.</text>
</comment>
<comment type="subunit">
    <text evidence="1">Interacts with translational regulator CsrA and flagellin(s).</text>
</comment>
<comment type="subcellular location">
    <subcellularLocation>
        <location evidence="1">Cytoplasm</location>
    </subcellularLocation>
</comment>
<comment type="similarity">
    <text evidence="1">Belongs to the FliW family.</text>
</comment>